<name>ZN649_HUMAN</name>
<feature type="chain" id="PRO_0000251224" description="Zinc finger protein 649">
    <location>
        <begin position="1"/>
        <end position="505"/>
    </location>
</feature>
<feature type="domain" description="KRAB" evidence="2">
    <location>
        <begin position="8"/>
        <end position="79"/>
    </location>
</feature>
<feature type="zinc finger region" description="C2H2-type 1" evidence="1">
    <location>
        <begin position="178"/>
        <end position="200"/>
    </location>
</feature>
<feature type="zinc finger region" description="C2H2-type 2" evidence="1">
    <location>
        <begin position="206"/>
        <end position="228"/>
    </location>
</feature>
<feature type="zinc finger region" description="C2H2-type 3" evidence="1">
    <location>
        <begin position="234"/>
        <end position="256"/>
    </location>
</feature>
<feature type="zinc finger region" description="C2H2-type 4" evidence="1">
    <location>
        <begin position="262"/>
        <end position="284"/>
    </location>
</feature>
<feature type="zinc finger region" description="C2H2-type 5" evidence="1">
    <location>
        <begin position="290"/>
        <end position="312"/>
    </location>
</feature>
<feature type="zinc finger region" description="C2H2-type 6" evidence="1">
    <location>
        <begin position="318"/>
        <end position="340"/>
    </location>
</feature>
<feature type="zinc finger region" description="C2H2-type 7" evidence="1">
    <location>
        <begin position="346"/>
        <end position="368"/>
    </location>
</feature>
<feature type="zinc finger region" description="C2H2-type 8" evidence="1">
    <location>
        <begin position="374"/>
        <end position="396"/>
    </location>
</feature>
<feature type="zinc finger region" description="C2H2-type 9" evidence="1">
    <location>
        <begin position="402"/>
        <end position="424"/>
    </location>
</feature>
<feature type="zinc finger region" description="C2H2-type 10" evidence="1">
    <location>
        <begin position="430"/>
        <end position="452"/>
    </location>
</feature>
<feature type="region of interest" description="Disordered" evidence="3">
    <location>
        <begin position="455"/>
        <end position="481"/>
    </location>
</feature>
<feature type="compositionally biased region" description="Polar residues" evidence="3">
    <location>
        <begin position="465"/>
        <end position="477"/>
    </location>
</feature>
<feature type="cross-link" description="Glycyl lysine isopeptide (Lys-Gly) (interchain with G-Cter in SUMO2)" evidence="6">
    <location>
        <position position="112"/>
    </location>
</feature>
<feature type="sequence variant" id="VAR_027668" description="In dbSNP:rs6509593.">
    <original>G</original>
    <variation>D</variation>
    <location>
        <position position="352"/>
    </location>
</feature>
<feature type="sequence variant" id="VAR_027669" description="In dbSNP:rs1433083.">
    <original>A</original>
    <variation>T</variation>
    <location>
        <position position="469"/>
    </location>
</feature>
<feature type="sequence conflict" description="In Ref. 2; BAB14191." evidence="5" ref="2">
    <original>L</original>
    <variation>V</variation>
    <location>
        <position position="8"/>
    </location>
</feature>
<feature type="sequence conflict" description="In Ref. 2; BAB14191." evidence="5" ref="2">
    <original>G</original>
    <variation>E</variation>
    <location>
        <position position="314"/>
    </location>
</feature>
<gene>
    <name type="primary">ZNF649</name>
</gene>
<comment type="function">
    <text evidence="4">Transcriptional repressor. Regulator of transcriptional factor complexes and may suppress SRE and AP-1 transcription activities mediated by growth factor signaling pathways.</text>
</comment>
<comment type="interaction">
    <interactant intactId="EBI-4395789">
        <id>Q9BS31</id>
    </interactant>
    <interactant intactId="EBI-351935">
        <id>P02545</id>
        <label>LMNA</label>
    </interactant>
    <organismsDiffer>false</organismsDiffer>
    <experiments>3</experiments>
</comment>
<comment type="interaction">
    <interactant intactId="EBI-4395789">
        <id>Q9BS31</id>
    </interactant>
    <interactant intactId="EBI-5235340">
        <id>Q7Z699</id>
        <label>SPRED1</label>
    </interactant>
    <organismsDiffer>false</organismsDiffer>
    <experiments>3</experiments>
</comment>
<comment type="interaction">
    <interactant intactId="EBI-4395789">
        <id>Q9BS31</id>
    </interactant>
    <interactant intactId="EBI-349968">
        <id>O43463</id>
        <label>SUV39H1</label>
    </interactant>
    <organismsDiffer>false</organismsDiffer>
    <experiments>2</experiments>
</comment>
<comment type="interaction">
    <interactant intactId="EBI-4395789">
        <id>Q9BS31</id>
    </interactant>
    <interactant intactId="EBI-78139">
        <id>Q13263</id>
        <label>TRIM28</label>
    </interactant>
    <organismsDiffer>false</organismsDiffer>
    <experiments>3</experiments>
</comment>
<comment type="subcellular location">
    <subcellularLocation>
        <location evidence="4">Nucleus</location>
    </subcellularLocation>
</comment>
<comment type="tissue specificity">
    <text evidence="4">Highly expressed in heart, skeletal muscle, and brain. Lower expression in liver, lung, kidney, pancreas and placenta.</text>
</comment>
<comment type="developmental stage">
    <text evidence="4">Expressed in fetal heart, brain, placenta, lung, liver, skeletal muscle, kidney, and pancreas.</text>
</comment>
<comment type="domain">
    <text>The KRAB domain is required for transcriptional repression.</text>
</comment>
<comment type="similarity">
    <text evidence="5">Belongs to the krueppel C2H2-type zinc-finger protein family.</text>
</comment>
<sequence>MTKAQESLTLEDVAVDFTWEEWQFLSPAQKDLYRDVMLENYSNLVSVGYQAGKPDALTKLEQGEPLWTLEDEIHSPAHPEIEKADDHLQQPLQNQKILKRTGQRYEHGRTLKSYLGLTNQSRRYNRKEPAEFNGDGAFLHDNHEQMPTEIEFPESRKPISTKSQFLKHQQTHNIEKAHECTDCGKAFLKKSQLTEHKRIHTGKKPHVCSLCGKAFYKKYRLTEHERAHRGEKPHGCSLCGKAFYKRYRLTEHERAHKGEKPYGCSECGKAFPRKSELTEHQRIHTGIKPHQCSECGRAFSRKSLLVVHQRTHTGEKPHTCSECGKGFIQKGNLNIHQRTHTGEKPYGCIDCGKAFSQKSCLVAHQRYHTGKTPFVCPECGQPCSQKSGLIRHQKIHSGEKPYKCSDCGKAFLTKTMLIVHHRTHTGERPYGCDECEKAYFYMSCLVKHKRIHSREKRGDSVKVENPSTASHSLSPSEHVQGKSPVNMVTVAMVAGQCEFAHILHS</sequence>
<keyword id="KW-0238">DNA-binding</keyword>
<keyword id="KW-1017">Isopeptide bond</keyword>
<keyword id="KW-0479">Metal-binding</keyword>
<keyword id="KW-0539">Nucleus</keyword>
<keyword id="KW-1267">Proteomics identification</keyword>
<keyword id="KW-1185">Reference proteome</keyword>
<keyword id="KW-0677">Repeat</keyword>
<keyword id="KW-0678">Repressor</keyword>
<keyword id="KW-0804">Transcription</keyword>
<keyword id="KW-0805">Transcription regulation</keyword>
<keyword id="KW-0832">Ubl conjugation</keyword>
<keyword id="KW-0862">Zinc</keyword>
<keyword id="KW-0863">Zinc-finger</keyword>
<dbReference type="EMBL" id="AK022706">
    <property type="protein sequence ID" value="BAB14191.1"/>
    <property type="molecule type" value="mRNA"/>
</dbReference>
<dbReference type="EMBL" id="AK315487">
    <property type="protein sequence ID" value="BAG37871.1"/>
    <property type="molecule type" value="mRNA"/>
</dbReference>
<dbReference type="EMBL" id="AL713677">
    <property type="protein sequence ID" value="CAD28482.1"/>
    <property type="molecule type" value="mRNA"/>
</dbReference>
<dbReference type="EMBL" id="AC011460">
    <property type="status" value="NOT_ANNOTATED_CDS"/>
    <property type="molecule type" value="Genomic_DNA"/>
</dbReference>
<dbReference type="EMBL" id="CH471135">
    <property type="protein sequence ID" value="EAW72050.1"/>
    <property type="molecule type" value="Genomic_DNA"/>
</dbReference>
<dbReference type="EMBL" id="BC005368">
    <property type="protein sequence ID" value="AAH05368.1"/>
    <property type="molecule type" value="mRNA"/>
</dbReference>
<dbReference type="CCDS" id="CCDS12843.1"/>
<dbReference type="RefSeq" id="NP_075562.2">
    <property type="nucleotide sequence ID" value="NM_023074.3"/>
</dbReference>
<dbReference type="SMR" id="Q9BS31"/>
<dbReference type="BioGRID" id="122414">
    <property type="interactions" value="11"/>
</dbReference>
<dbReference type="FunCoup" id="Q9BS31">
    <property type="interactions" value="74"/>
</dbReference>
<dbReference type="IntAct" id="Q9BS31">
    <property type="interactions" value="8"/>
</dbReference>
<dbReference type="MINT" id="Q9BS31"/>
<dbReference type="GlyGen" id="Q9BS31">
    <property type="glycosylation" value="1 site, 1 O-linked glycan (1 site)"/>
</dbReference>
<dbReference type="iPTMnet" id="Q9BS31"/>
<dbReference type="PhosphoSitePlus" id="Q9BS31"/>
<dbReference type="BioMuta" id="ZNF649"/>
<dbReference type="DMDM" id="74761227"/>
<dbReference type="jPOST" id="Q9BS31"/>
<dbReference type="MassIVE" id="Q9BS31"/>
<dbReference type="PaxDb" id="9606-ENSP00000347043"/>
<dbReference type="PeptideAtlas" id="Q9BS31"/>
<dbReference type="ProteomicsDB" id="78862"/>
<dbReference type="Pumba" id="Q9BS31"/>
<dbReference type="Antibodypedia" id="19056">
    <property type="antibodies" value="93 antibodies from 18 providers"/>
</dbReference>
<dbReference type="DNASU" id="65251"/>
<dbReference type="Ensembl" id="ENST00000354957.8">
    <property type="protein sequence ID" value="ENSP00000347043.2"/>
    <property type="gene ID" value="ENSG00000198093.11"/>
</dbReference>
<dbReference type="GeneID" id="65251"/>
<dbReference type="KEGG" id="hsa:65251"/>
<dbReference type="MANE-Select" id="ENST00000354957.8">
    <property type="protein sequence ID" value="ENSP00000347043.2"/>
    <property type="RefSeq nucleotide sequence ID" value="NM_023074.4"/>
    <property type="RefSeq protein sequence ID" value="NP_075562.2"/>
</dbReference>
<dbReference type="UCSC" id="uc002pxy.4">
    <property type="organism name" value="human"/>
</dbReference>
<dbReference type="AGR" id="HGNC:25741"/>
<dbReference type="CTD" id="65251"/>
<dbReference type="DisGeNET" id="65251"/>
<dbReference type="GeneCards" id="ZNF649"/>
<dbReference type="HGNC" id="HGNC:25741">
    <property type="gene designation" value="ZNF649"/>
</dbReference>
<dbReference type="HPA" id="ENSG00000198093">
    <property type="expression patterns" value="Low tissue specificity"/>
</dbReference>
<dbReference type="MIM" id="611903">
    <property type="type" value="gene"/>
</dbReference>
<dbReference type="neXtProt" id="NX_Q9BS31"/>
<dbReference type="OpenTargets" id="ENSG00000198093"/>
<dbReference type="PharmGKB" id="PA143485678"/>
<dbReference type="VEuPathDB" id="HostDB:ENSG00000198093"/>
<dbReference type="eggNOG" id="KOG1721">
    <property type="taxonomic scope" value="Eukaryota"/>
</dbReference>
<dbReference type="GeneTree" id="ENSGT00940000164046"/>
<dbReference type="InParanoid" id="Q9BS31"/>
<dbReference type="OMA" id="KQTHTEI"/>
<dbReference type="OrthoDB" id="10072647at2759"/>
<dbReference type="PAN-GO" id="Q9BS31">
    <property type="GO annotations" value="3 GO annotations based on evolutionary models"/>
</dbReference>
<dbReference type="PhylomeDB" id="Q9BS31"/>
<dbReference type="TreeFam" id="TF340593"/>
<dbReference type="PathwayCommons" id="Q9BS31"/>
<dbReference type="Reactome" id="R-HSA-212436">
    <property type="pathway name" value="Generic Transcription Pathway"/>
</dbReference>
<dbReference type="Reactome" id="R-HSA-9843940">
    <property type="pathway name" value="Regulation of endogenous retroelements by KRAB-ZFP proteins"/>
</dbReference>
<dbReference type="SignaLink" id="Q9BS31"/>
<dbReference type="BioGRID-ORCS" id="65251">
    <property type="hits" value="8 hits in 1174 CRISPR screens"/>
</dbReference>
<dbReference type="ChiTaRS" id="ZNF649">
    <property type="organism name" value="human"/>
</dbReference>
<dbReference type="GeneWiki" id="ZNF649"/>
<dbReference type="GenomeRNAi" id="65251"/>
<dbReference type="Pharos" id="Q9BS31">
    <property type="development level" value="Tdark"/>
</dbReference>
<dbReference type="PRO" id="PR:Q9BS31"/>
<dbReference type="Proteomes" id="UP000005640">
    <property type="component" value="Chromosome 19"/>
</dbReference>
<dbReference type="RNAct" id="Q9BS31">
    <property type="molecule type" value="protein"/>
</dbReference>
<dbReference type="Bgee" id="ENSG00000198093">
    <property type="expression patterns" value="Expressed in corpus callosum and 109 other cell types or tissues"/>
</dbReference>
<dbReference type="ExpressionAtlas" id="Q9BS31">
    <property type="expression patterns" value="baseline and differential"/>
</dbReference>
<dbReference type="GO" id="GO:0005615">
    <property type="term" value="C:extracellular space"/>
    <property type="evidence" value="ECO:0007005"/>
    <property type="project" value="UniProtKB"/>
</dbReference>
<dbReference type="GO" id="GO:0005634">
    <property type="term" value="C:nucleus"/>
    <property type="evidence" value="ECO:0000314"/>
    <property type="project" value="LIFEdb"/>
</dbReference>
<dbReference type="GO" id="GO:0003700">
    <property type="term" value="F:DNA-binding transcription factor activity"/>
    <property type="evidence" value="ECO:0000318"/>
    <property type="project" value="GO_Central"/>
</dbReference>
<dbReference type="GO" id="GO:0000978">
    <property type="term" value="F:RNA polymerase II cis-regulatory region sequence-specific DNA binding"/>
    <property type="evidence" value="ECO:0000318"/>
    <property type="project" value="GO_Central"/>
</dbReference>
<dbReference type="GO" id="GO:0008270">
    <property type="term" value="F:zinc ion binding"/>
    <property type="evidence" value="ECO:0007669"/>
    <property type="project" value="UniProtKB-KW"/>
</dbReference>
<dbReference type="GO" id="GO:0006357">
    <property type="term" value="P:regulation of transcription by RNA polymerase II"/>
    <property type="evidence" value="ECO:0000318"/>
    <property type="project" value="GO_Central"/>
</dbReference>
<dbReference type="CDD" id="cd07765">
    <property type="entry name" value="KRAB_A-box"/>
    <property type="match status" value="1"/>
</dbReference>
<dbReference type="FunFam" id="3.30.160.60:FF:002063">
    <property type="entry name" value="RB associated KRAB zinc finger"/>
    <property type="match status" value="1"/>
</dbReference>
<dbReference type="FunFam" id="3.30.160.60:FF:000006">
    <property type="entry name" value="Zinc finger protein 184 (Kruppel-like)"/>
    <property type="match status" value="1"/>
</dbReference>
<dbReference type="FunFam" id="3.30.160.60:FF:002343">
    <property type="entry name" value="Zinc finger protein 33A"/>
    <property type="match status" value="1"/>
</dbReference>
<dbReference type="FunFam" id="3.30.160.60:FF:000848">
    <property type="entry name" value="Zinc finger protein 35"/>
    <property type="match status" value="1"/>
</dbReference>
<dbReference type="FunFam" id="3.30.160.60:FF:000016">
    <property type="entry name" value="zinc finger protein 37 homolog"/>
    <property type="match status" value="1"/>
</dbReference>
<dbReference type="FunFam" id="3.30.160.60:FF:001672">
    <property type="entry name" value="Zinc finger protein 614"/>
    <property type="match status" value="1"/>
</dbReference>
<dbReference type="FunFam" id="3.30.160.60:FF:000495">
    <property type="entry name" value="zinc finger protein 668"/>
    <property type="match status" value="1"/>
</dbReference>
<dbReference type="FunFam" id="3.30.160.60:FF:000320">
    <property type="entry name" value="Zinc finger protein 777"/>
    <property type="match status" value="1"/>
</dbReference>
<dbReference type="FunFam" id="3.30.160.60:FF:003149">
    <property type="entry name" value="ZNF649 isoform 1"/>
    <property type="match status" value="2"/>
</dbReference>
<dbReference type="Gene3D" id="6.10.140.140">
    <property type="match status" value="1"/>
</dbReference>
<dbReference type="Gene3D" id="3.30.160.60">
    <property type="entry name" value="Classic Zinc Finger"/>
    <property type="match status" value="10"/>
</dbReference>
<dbReference type="InterPro" id="IPR001909">
    <property type="entry name" value="KRAB"/>
</dbReference>
<dbReference type="InterPro" id="IPR036051">
    <property type="entry name" value="KRAB_dom_sf"/>
</dbReference>
<dbReference type="InterPro" id="IPR036236">
    <property type="entry name" value="Znf_C2H2_sf"/>
</dbReference>
<dbReference type="InterPro" id="IPR013087">
    <property type="entry name" value="Znf_C2H2_type"/>
</dbReference>
<dbReference type="PANTHER" id="PTHR24399">
    <property type="entry name" value="ZINC FINGER AND BTB DOMAIN-CONTAINING"/>
    <property type="match status" value="1"/>
</dbReference>
<dbReference type="PANTHER" id="PTHR24399:SF49">
    <property type="entry name" value="ZINC FINGER PROTEIN 674"/>
    <property type="match status" value="1"/>
</dbReference>
<dbReference type="Pfam" id="PF01352">
    <property type="entry name" value="KRAB"/>
    <property type="match status" value="1"/>
</dbReference>
<dbReference type="Pfam" id="PF00096">
    <property type="entry name" value="zf-C2H2"/>
    <property type="match status" value="8"/>
</dbReference>
<dbReference type="SMART" id="SM00349">
    <property type="entry name" value="KRAB"/>
    <property type="match status" value="1"/>
</dbReference>
<dbReference type="SMART" id="SM00355">
    <property type="entry name" value="ZnF_C2H2"/>
    <property type="match status" value="10"/>
</dbReference>
<dbReference type="SUPFAM" id="SSF57667">
    <property type="entry name" value="beta-beta-alpha zinc fingers"/>
    <property type="match status" value="5"/>
</dbReference>
<dbReference type="SUPFAM" id="SSF109640">
    <property type="entry name" value="KRAB domain (Kruppel-associated box)"/>
    <property type="match status" value="1"/>
</dbReference>
<dbReference type="PROSITE" id="PS50805">
    <property type="entry name" value="KRAB"/>
    <property type="match status" value="1"/>
</dbReference>
<dbReference type="PROSITE" id="PS00028">
    <property type="entry name" value="ZINC_FINGER_C2H2_1"/>
    <property type="match status" value="10"/>
</dbReference>
<dbReference type="PROSITE" id="PS50157">
    <property type="entry name" value="ZINC_FINGER_C2H2_2"/>
    <property type="match status" value="10"/>
</dbReference>
<organism>
    <name type="scientific">Homo sapiens</name>
    <name type="common">Human</name>
    <dbReference type="NCBI Taxonomy" id="9606"/>
    <lineage>
        <taxon>Eukaryota</taxon>
        <taxon>Metazoa</taxon>
        <taxon>Chordata</taxon>
        <taxon>Craniata</taxon>
        <taxon>Vertebrata</taxon>
        <taxon>Euteleostomi</taxon>
        <taxon>Mammalia</taxon>
        <taxon>Eutheria</taxon>
        <taxon>Euarchontoglires</taxon>
        <taxon>Primates</taxon>
        <taxon>Haplorrhini</taxon>
        <taxon>Catarrhini</taxon>
        <taxon>Hominidae</taxon>
        <taxon>Homo</taxon>
    </lineage>
</organism>
<protein>
    <recommendedName>
        <fullName>Zinc finger protein 649</fullName>
    </recommendedName>
</protein>
<accession>Q9BS31</accession>
<accession>A8MYJ5</accession>
<accession>B2RDC4</accession>
<accession>Q9H9N2</accession>
<evidence type="ECO:0000255" key="1">
    <source>
        <dbReference type="PROSITE-ProRule" id="PRU00042"/>
    </source>
</evidence>
<evidence type="ECO:0000255" key="2">
    <source>
        <dbReference type="PROSITE-ProRule" id="PRU00119"/>
    </source>
</evidence>
<evidence type="ECO:0000256" key="3">
    <source>
        <dbReference type="SAM" id="MobiDB-lite"/>
    </source>
</evidence>
<evidence type="ECO:0000269" key="4">
    <source>
    </source>
</evidence>
<evidence type="ECO:0000305" key="5"/>
<evidence type="ECO:0007744" key="6">
    <source>
    </source>
</evidence>
<proteinExistence type="evidence at protein level"/>
<reference key="1">
    <citation type="journal article" date="2005" name="Biochem. Biophys. Res. Commun.">
        <title>ZNF649, a novel Kruppel type zinc-finger protein, functions as a transcriptional suppressor.</title>
        <authorList>
            <person name="Yang H."/>
            <person name="Yuan W."/>
            <person name="Wang Y."/>
            <person name="Zhu C."/>
            <person name="Liu B."/>
            <person name="Wang Y."/>
            <person name="Yang D."/>
            <person name="Li Y."/>
            <person name="Wang C."/>
            <person name="Wu X."/>
            <person name="Liu M."/>
        </authorList>
    </citation>
    <scope>NUCLEOTIDE SEQUENCE [MRNA]</scope>
    <scope>FUNCTION</scope>
    <scope>SUBCELLULAR LOCATION</scope>
    <scope>TISSUE SPECIFICITY</scope>
    <scope>DEVELOPMENTAL STAGE</scope>
</reference>
<reference key="2">
    <citation type="journal article" date="2004" name="Nat. Genet.">
        <title>Complete sequencing and characterization of 21,243 full-length human cDNAs.</title>
        <authorList>
            <person name="Ota T."/>
            <person name="Suzuki Y."/>
            <person name="Nishikawa T."/>
            <person name="Otsuki T."/>
            <person name="Sugiyama T."/>
            <person name="Irie R."/>
            <person name="Wakamatsu A."/>
            <person name="Hayashi K."/>
            <person name="Sato H."/>
            <person name="Nagai K."/>
            <person name="Kimura K."/>
            <person name="Makita H."/>
            <person name="Sekine M."/>
            <person name="Obayashi M."/>
            <person name="Nishi T."/>
            <person name="Shibahara T."/>
            <person name="Tanaka T."/>
            <person name="Ishii S."/>
            <person name="Yamamoto J."/>
            <person name="Saito K."/>
            <person name="Kawai Y."/>
            <person name="Isono Y."/>
            <person name="Nakamura Y."/>
            <person name="Nagahari K."/>
            <person name="Murakami K."/>
            <person name="Yasuda T."/>
            <person name="Iwayanagi T."/>
            <person name="Wagatsuma M."/>
            <person name="Shiratori A."/>
            <person name="Sudo H."/>
            <person name="Hosoiri T."/>
            <person name="Kaku Y."/>
            <person name="Kodaira H."/>
            <person name="Kondo H."/>
            <person name="Sugawara M."/>
            <person name="Takahashi M."/>
            <person name="Kanda K."/>
            <person name="Yokoi T."/>
            <person name="Furuya T."/>
            <person name="Kikkawa E."/>
            <person name="Omura Y."/>
            <person name="Abe K."/>
            <person name="Kamihara K."/>
            <person name="Katsuta N."/>
            <person name="Sato K."/>
            <person name="Tanikawa M."/>
            <person name="Yamazaki M."/>
            <person name="Ninomiya K."/>
            <person name="Ishibashi T."/>
            <person name="Yamashita H."/>
            <person name="Murakawa K."/>
            <person name="Fujimori K."/>
            <person name="Tanai H."/>
            <person name="Kimata M."/>
            <person name="Watanabe M."/>
            <person name="Hiraoka S."/>
            <person name="Chiba Y."/>
            <person name="Ishida S."/>
            <person name="Ono Y."/>
            <person name="Takiguchi S."/>
            <person name="Watanabe S."/>
            <person name="Yosida M."/>
            <person name="Hotuta T."/>
            <person name="Kusano J."/>
            <person name="Kanehori K."/>
            <person name="Takahashi-Fujii A."/>
            <person name="Hara H."/>
            <person name="Tanase T.-O."/>
            <person name="Nomura Y."/>
            <person name="Togiya S."/>
            <person name="Komai F."/>
            <person name="Hara R."/>
            <person name="Takeuchi K."/>
            <person name="Arita M."/>
            <person name="Imose N."/>
            <person name="Musashino K."/>
            <person name="Yuuki H."/>
            <person name="Oshima A."/>
            <person name="Sasaki N."/>
            <person name="Aotsuka S."/>
            <person name="Yoshikawa Y."/>
            <person name="Matsunawa H."/>
            <person name="Ichihara T."/>
            <person name="Shiohata N."/>
            <person name="Sano S."/>
            <person name="Moriya S."/>
            <person name="Momiyama H."/>
            <person name="Satoh N."/>
            <person name="Takami S."/>
            <person name="Terashima Y."/>
            <person name="Suzuki O."/>
            <person name="Nakagawa S."/>
            <person name="Senoh A."/>
            <person name="Mizoguchi H."/>
            <person name="Goto Y."/>
            <person name="Shimizu F."/>
            <person name="Wakebe H."/>
            <person name="Hishigaki H."/>
            <person name="Watanabe T."/>
            <person name="Sugiyama A."/>
            <person name="Takemoto M."/>
            <person name="Kawakami B."/>
            <person name="Yamazaki M."/>
            <person name="Watanabe K."/>
            <person name="Kumagai A."/>
            <person name="Itakura S."/>
            <person name="Fukuzumi Y."/>
            <person name="Fujimori Y."/>
            <person name="Komiyama M."/>
            <person name="Tashiro H."/>
            <person name="Tanigami A."/>
            <person name="Fujiwara T."/>
            <person name="Ono T."/>
            <person name="Yamada K."/>
            <person name="Fujii Y."/>
            <person name="Ozaki K."/>
            <person name="Hirao M."/>
            <person name="Ohmori Y."/>
            <person name="Kawabata A."/>
            <person name="Hikiji T."/>
            <person name="Kobatake N."/>
            <person name="Inagaki H."/>
            <person name="Ikema Y."/>
            <person name="Okamoto S."/>
            <person name="Okitani R."/>
            <person name="Kawakami T."/>
            <person name="Noguchi S."/>
            <person name="Itoh T."/>
            <person name="Shigeta K."/>
            <person name="Senba T."/>
            <person name="Matsumura K."/>
            <person name="Nakajima Y."/>
            <person name="Mizuno T."/>
            <person name="Morinaga M."/>
            <person name="Sasaki M."/>
            <person name="Togashi T."/>
            <person name="Oyama M."/>
            <person name="Hata H."/>
            <person name="Watanabe M."/>
            <person name="Komatsu T."/>
            <person name="Mizushima-Sugano J."/>
            <person name="Satoh T."/>
            <person name="Shirai Y."/>
            <person name="Takahashi Y."/>
            <person name="Nakagawa K."/>
            <person name="Okumura K."/>
            <person name="Nagase T."/>
            <person name="Nomura N."/>
            <person name="Kikuchi H."/>
            <person name="Masuho Y."/>
            <person name="Yamashita R."/>
            <person name="Nakai K."/>
            <person name="Yada T."/>
            <person name="Nakamura Y."/>
            <person name="Ohara O."/>
            <person name="Isogai T."/>
            <person name="Sugano S."/>
        </authorList>
    </citation>
    <scope>NUCLEOTIDE SEQUENCE [LARGE SCALE MRNA]</scope>
    <source>
        <tissue>Teratocarcinoma</tissue>
    </source>
</reference>
<reference key="3">
    <citation type="journal article" date="2007" name="BMC Genomics">
        <title>The full-ORF clone resource of the German cDNA consortium.</title>
        <authorList>
            <person name="Bechtel S."/>
            <person name="Rosenfelder H."/>
            <person name="Duda A."/>
            <person name="Schmidt C.P."/>
            <person name="Ernst U."/>
            <person name="Wellenreuther R."/>
            <person name="Mehrle A."/>
            <person name="Schuster C."/>
            <person name="Bahr A."/>
            <person name="Bloecker H."/>
            <person name="Heubner D."/>
            <person name="Hoerlein A."/>
            <person name="Michel G."/>
            <person name="Wedler H."/>
            <person name="Koehrer K."/>
            <person name="Ottenwaelder B."/>
            <person name="Poustka A."/>
            <person name="Wiemann S."/>
            <person name="Schupp I."/>
        </authorList>
    </citation>
    <scope>NUCLEOTIDE SEQUENCE [LARGE SCALE MRNA]</scope>
    <source>
        <tissue>Amygdala</tissue>
    </source>
</reference>
<reference key="4">
    <citation type="journal article" date="2004" name="Nature">
        <title>The DNA sequence and biology of human chromosome 19.</title>
        <authorList>
            <person name="Grimwood J."/>
            <person name="Gordon L.A."/>
            <person name="Olsen A.S."/>
            <person name="Terry A."/>
            <person name="Schmutz J."/>
            <person name="Lamerdin J.E."/>
            <person name="Hellsten U."/>
            <person name="Goodstein D."/>
            <person name="Couronne O."/>
            <person name="Tran-Gyamfi M."/>
            <person name="Aerts A."/>
            <person name="Altherr M."/>
            <person name="Ashworth L."/>
            <person name="Bajorek E."/>
            <person name="Black S."/>
            <person name="Branscomb E."/>
            <person name="Caenepeel S."/>
            <person name="Carrano A.V."/>
            <person name="Caoile C."/>
            <person name="Chan Y.M."/>
            <person name="Christensen M."/>
            <person name="Cleland C.A."/>
            <person name="Copeland A."/>
            <person name="Dalin E."/>
            <person name="Dehal P."/>
            <person name="Denys M."/>
            <person name="Detter J.C."/>
            <person name="Escobar J."/>
            <person name="Flowers D."/>
            <person name="Fotopulos D."/>
            <person name="Garcia C."/>
            <person name="Georgescu A.M."/>
            <person name="Glavina T."/>
            <person name="Gomez M."/>
            <person name="Gonzales E."/>
            <person name="Groza M."/>
            <person name="Hammon N."/>
            <person name="Hawkins T."/>
            <person name="Haydu L."/>
            <person name="Ho I."/>
            <person name="Huang W."/>
            <person name="Israni S."/>
            <person name="Jett J."/>
            <person name="Kadner K."/>
            <person name="Kimball H."/>
            <person name="Kobayashi A."/>
            <person name="Larionov V."/>
            <person name="Leem S.-H."/>
            <person name="Lopez F."/>
            <person name="Lou Y."/>
            <person name="Lowry S."/>
            <person name="Malfatti S."/>
            <person name="Martinez D."/>
            <person name="McCready P.M."/>
            <person name="Medina C."/>
            <person name="Morgan J."/>
            <person name="Nelson K."/>
            <person name="Nolan M."/>
            <person name="Ovcharenko I."/>
            <person name="Pitluck S."/>
            <person name="Pollard M."/>
            <person name="Popkie A.P."/>
            <person name="Predki P."/>
            <person name="Quan G."/>
            <person name="Ramirez L."/>
            <person name="Rash S."/>
            <person name="Retterer J."/>
            <person name="Rodriguez A."/>
            <person name="Rogers S."/>
            <person name="Salamov A."/>
            <person name="Salazar A."/>
            <person name="She X."/>
            <person name="Smith D."/>
            <person name="Slezak T."/>
            <person name="Solovyev V."/>
            <person name="Thayer N."/>
            <person name="Tice H."/>
            <person name="Tsai M."/>
            <person name="Ustaszewska A."/>
            <person name="Vo N."/>
            <person name="Wagner M."/>
            <person name="Wheeler J."/>
            <person name="Wu K."/>
            <person name="Xie G."/>
            <person name="Yang J."/>
            <person name="Dubchak I."/>
            <person name="Furey T.S."/>
            <person name="DeJong P."/>
            <person name="Dickson M."/>
            <person name="Gordon D."/>
            <person name="Eichler E.E."/>
            <person name="Pennacchio L.A."/>
            <person name="Richardson P."/>
            <person name="Stubbs L."/>
            <person name="Rokhsar D.S."/>
            <person name="Myers R.M."/>
            <person name="Rubin E.M."/>
            <person name="Lucas S.M."/>
        </authorList>
    </citation>
    <scope>NUCLEOTIDE SEQUENCE [LARGE SCALE GENOMIC DNA]</scope>
</reference>
<reference key="5">
    <citation type="submission" date="2005-07" db="EMBL/GenBank/DDBJ databases">
        <authorList>
            <person name="Mural R.J."/>
            <person name="Istrail S."/>
            <person name="Sutton G.G."/>
            <person name="Florea L."/>
            <person name="Halpern A.L."/>
            <person name="Mobarry C.M."/>
            <person name="Lippert R."/>
            <person name="Walenz B."/>
            <person name="Shatkay H."/>
            <person name="Dew I."/>
            <person name="Miller J.R."/>
            <person name="Flanigan M.J."/>
            <person name="Edwards N.J."/>
            <person name="Bolanos R."/>
            <person name="Fasulo D."/>
            <person name="Halldorsson B.V."/>
            <person name="Hannenhalli S."/>
            <person name="Turner R."/>
            <person name="Yooseph S."/>
            <person name="Lu F."/>
            <person name="Nusskern D.R."/>
            <person name="Shue B.C."/>
            <person name="Zheng X.H."/>
            <person name="Zhong F."/>
            <person name="Delcher A.L."/>
            <person name="Huson D.H."/>
            <person name="Kravitz S.A."/>
            <person name="Mouchard L."/>
            <person name="Reinert K."/>
            <person name="Remington K.A."/>
            <person name="Clark A.G."/>
            <person name="Waterman M.S."/>
            <person name="Eichler E.E."/>
            <person name="Adams M.D."/>
            <person name="Hunkapiller M.W."/>
            <person name="Myers E.W."/>
            <person name="Venter J.C."/>
        </authorList>
    </citation>
    <scope>NUCLEOTIDE SEQUENCE [LARGE SCALE GENOMIC DNA]</scope>
</reference>
<reference key="6">
    <citation type="journal article" date="2004" name="Genome Res.">
        <title>The status, quality, and expansion of the NIH full-length cDNA project: the Mammalian Gene Collection (MGC).</title>
        <authorList>
            <consortium name="The MGC Project Team"/>
        </authorList>
    </citation>
    <scope>NUCLEOTIDE SEQUENCE [LARGE SCALE MRNA]</scope>
    <source>
        <tissue>Lung</tissue>
    </source>
</reference>
<reference key="7">
    <citation type="journal article" date="2017" name="Nat. Struct. Mol. Biol.">
        <title>Site-specific mapping of the human SUMO proteome reveals co-modification with phosphorylation.</title>
        <authorList>
            <person name="Hendriks I.A."/>
            <person name="Lyon D."/>
            <person name="Young C."/>
            <person name="Jensen L.J."/>
            <person name="Vertegaal A.C."/>
            <person name="Nielsen M.L."/>
        </authorList>
    </citation>
    <scope>SUMOYLATION [LARGE SCALE ANALYSIS] AT LYS-112</scope>
    <scope>IDENTIFICATION BY MASS SPECTROMETRY [LARGE SCALE ANALYSIS]</scope>
</reference>